<accession>B5XZ47</accession>
<dbReference type="EMBL" id="CP000964">
    <property type="protein sequence ID" value="ACI11487.1"/>
    <property type="molecule type" value="Genomic_DNA"/>
</dbReference>
<dbReference type="KEGG" id="kpe:KPK_5463"/>
<dbReference type="HOGENOM" id="CLU_066437_0_0_6"/>
<dbReference type="Proteomes" id="UP000001734">
    <property type="component" value="Chromosome"/>
</dbReference>
<dbReference type="GO" id="GO:0005886">
    <property type="term" value="C:plasma membrane"/>
    <property type="evidence" value="ECO:0007669"/>
    <property type="project" value="UniProtKB-SubCell"/>
</dbReference>
<dbReference type="GO" id="GO:0015153">
    <property type="term" value="F:rhamnose transmembrane transporter activity"/>
    <property type="evidence" value="ECO:0007669"/>
    <property type="project" value="UniProtKB-UniRule"/>
</dbReference>
<dbReference type="GO" id="GO:0015293">
    <property type="term" value="F:symporter activity"/>
    <property type="evidence" value="ECO:0007669"/>
    <property type="project" value="UniProtKB-KW"/>
</dbReference>
<dbReference type="HAMAP" id="MF_01532">
    <property type="entry name" value="RhaT"/>
    <property type="match status" value="1"/>
</dbReference>
<dbReference type="InterPro" id="IPR004673">
    <property type="entry name" value="L-rhamnose-proton_sym_RhaT"/>
</dbReference>
<dbReference type="NCBIfam" id="NF010021">
    <property type="entry name" value="PRK13499.1-1"/>
    <property type="match status" value="1"/>
</dbReference>
<dbReference type="NCBIfam" id="NF010023">
    <property type="entry name" value="PRK13499.1-3"/>
    <property type="match status" value="1"/>
</dbReference>
<dbReference type="NCBIfam" id="TIGR00776">
    <property type="entry name" value="RhaT"/>
    <property type="match status" value="1"/>
</dbReference>
<dbReference type="Pfam" id="PF06379">
    <property type="entry name" value="RhaT"/>
    <property type="match status" value="1"/>
</dbReference>
<protein>
    <recommendedName>
        <fullName evidence="1">L-rhamnose-proton symporter</fullName>
    </recommendedName>
    <alternativeName>
        <fullName evidence="1">L-rhamnose-H(+) transport protein</fullName>
    </alternativeName>
</protein>
<proteinExistence type="inferred from homology"/>
<comment type="function">
    <text evidence="1">Uptake of L-rhamnose across the cytoplasmic membrane with the concomitant transport of protons into the cell (symport system).</text>
</comment>
<comment type="catalytic activity">
    <reaction evidence="1">
        <text>L-rhamnopyranose(in) + H(+)(in) = L-rhamnopyranose(out) + H(+)(out)</text>
        <dbReference type="Rhea" id="RHEA:29947"/>
        <dbReference type="ChEBI" id="CHEBI:15378"/>
        <dbReference type="ChEBI" id="CHEBI:62346"/>
    </reaction>
    <physiologicalReaction direction="right-to-left" evidence="1">
        <dbReference type="Rhea" id="RHEA:29949"/>
    </physiologicalReaction>
</comment>
<comment type="subcellular location">
    <subcellularLocation>
        <location evidence="1">Cell inner membrane</location>
        <topology evidence="1">Multi-pass membrane protein</topology>
    </subcellularLocation>
</comment>
<comment type="similarity">
    <text evidence="1">Belongs to the L-rhamnose transporter (TC 2.A.7.6) family.</text>
</comment>
<evidence type="ECO:0000255" key="1">
    <source>
        <dbReference type="HAMAP-Rule" id="MF_01532"/>
    </source>
</evidence>
<sequence length="344" mass="37199">MNHAITMGIFWHLIGAASAACFYAPFKKVKHWSWETMWSVGGIVSWLILPWAISATLLPDFWAYYRSFNASTLLPVFLFGAMWGIGNINYGLTMRYLGMSMGIGIAIGITLIVGTLMTPIINGQFSVLMHTQGGQMTLLGVLVAVIGVGIVTRAGQLKERKMGIKAEEFNLKKGLLLAVMCGIFSAGMSFAMNAAKPMHDAAAALGVDPLYAALPSYVVIMGGGALVNLGFCFIRLAKVKNLSVKADFSLAKPLIISNLLLSALGGLMWYLQFFFYAWGHASIPAQYDYMSWMLHMSFYVLCGGLVGLVLKEWNNAGRRPVSVLSLGCVVIIIAANIVGLGMAS</sequence>
<keyword id="KW-0997">Cell inner membrane</keyword>
<keyword id="KW-1003">Cell membrane</keyword>
<keyword id="KW-0472">Membrane</keyword>
<keyword id="KW-0762">Sugar transport</keyword>
<keyword id="KW-0769">Symport</keyword>
<keyword id="KW-0812">Transmembrane</keyword>
<keyword id="KW-1133">Transmembrane helix</keyword>
<keyword id="KW-0813">Transport</keyword>
<feature type="chain" id="PRO_1000193750" description="L-rhamnose-proton symporter">
    <location>
        <begin position="1"/>
        <end position="344"/>
    </location>
</feature>
<feature type="transmembrane region" description="Helical" evidence="1">
    <location>
        <begin position="4"/>
        <end position="24"/>
    </location>
</feature>
<feature type="transmembrane region" description="Helical" evidence="1">
    <location>
        <begin position="38"/>
        <end position="58"/>
    </location>
</feature>
<feature type="transmembrane region" description="Helical" evidence="1">
    <location>
        <begin position="72"/>
        <end position="92"/>
    </location>
</feature>
<feature type="transmembrane region" description="Helical" evidence="1">
    <location>
        <begin position="101"/>
        <end position="121"/>
    </location>
</feature>
<feature type="transmembrane region" description="Helical" evidence="1">
    <location>
        <begin position="131"/>
        <end position="151"/>
    </location>
</feature>
<feature type="transmembrane region" description="Helical" evidence="1">
    <location>
        <begin position="175"/>
        <end position="195"/>
    </location>
</feature>
<feature type="transmembrane region" description="Helical" evidence="1">
    <location>
        <begin position="214"/>
        <end position="234"/>
    </location>
</feature>
<feature type="transmembrane region" description="Helical" evidence="1">
    <location>
        <begin position="259"/>
        <end position="279"/>
    </location>
</feature>
<feature type="transmembrane region" description="Helical" evidence="1">
    <location>
        <begin position="290"/>
        <end position="310"/>
    </location>
</feature>
<feature type="transmembrane region" description="Helical" evidence="1">
    <location>
        <begin position="323"/>
        <end position="343"/>
    </location>
</feature>
<name>RHAT_KLEP3</name>
<gene>
    <name evidence="1" type="primary">rhaT</name>
    <name type="ordered locus">KPK_5463</name>
</gene>
<reference key="1">
    <citation type="journal article" date="2008" name="PLoS Genet.">
        <title>Complete genome sequence of the N2-fixing broad host range endophyte Klebsiella pneumoniae 342 and virulence predictions verified in mice.</title>
        <authorList>
            <person name="Fouts D.E."/>
            <person name="Tyler H.L."/>
            <person name="DeBoy R.T."/>
            <person name="Daugherty S."/>
            <person name="Ren Q."/>
            <person name="Badger J.H."/>
            <person name="Durkin A.S."/>
            <person name="Huot H."/>
            <person name="Shrivastava S."/>
            <person name="Kothari S."/>
            <person name="Dodson R.J."/>
            <person name="Mohamoud Y."/>
            <person name="Khouri H."/>
            <person name="Roesch L.F.W."/>
            <person name="Krogfelt K.A."/>
            <person name="Struve C."/>
            <person name="Triplett E.W."/>
            <person name="Methe B.A."/>
        </authorList>
    </citation>
    <scope>NUCLEOTIDE SEQUENCE [LARGE SCALE GENOMIC DNA]</scope>
    <source>
        <strain>342</strain>
    </source>
</reference>
<organism>
    <name type="scientific">Klebsiella pneumoniae (strain 342)</name>
    <dbReference type="NCBI Taxonomy" id="507522"/>
    <lineage>
        <taxon>Bacteria</taxon>
        <taxon>Pseudomonadati</taxon>
        <taxon>Pseudomonadota</taxon>
        <taxon>Gammaproteobacteria</taxon>
        <taxon>Enterobacterales</taxon>
        <taxon>Enterobacteriaceae</taxon>
        <taxon>Klebsiella/Raoultella group</taxon>
        <taxon>Klebsiella</taxon>
        <taxon>Klebsiella pneumoniae complex</taxon>
    </lineage>
</organism>